<name>KDGL_ECOLI</name>
<sequence length="122" mass="13245">MANNTTGFTRIIKAAGYSWKGLRAAWINEAAFRQEGVAVLLAVVIACWLDVDAITRVLLISSVMLVMIVEILNSAIEAVVDRIGSEYHELSGRAKDMGSAAVLIAIIVAVITWCILLWSHFG</sequence>
<protein>
    <recommendedName>
        <fullName evidence="28">Diacylglycerol kinase</fullName>
        <shortName evidence="29">DAGK</shortName>
        <ecNumber evidence="9 15 16 19 20 24">2.7.1.107</ecNumber>
    </recommendedName>
    <alternativeName>
        <fullName evidence="26">Diglyceride kinase</fullName>
        <shortName evidence="30">DGK</shortName>
    </alternativeName>
</protein>
<gene>
    <name evidence="27" type="primary">dgkA</name>
    <name evidence="26" type="synonym">dgk</name>
    <name type="ordered locus">b4042</name>
    <name type="ordered locus">JW4002</name>
</gene>
<evidence type="ECO:0000255" key="1"/>
<evidence type="ECO:0000269" key="2">
    <source>
    </source>
</evidence>
<evidence type="ECO:0000269" key="3">
    <source>
    </source>
</evidence>
<evidence type="ECO:0000269" key="4">
    <source>
    </source>
</evidence>
<evidence type="ECO:0000269" key="5">
    <source>
    </source>
</evidence>
<evidence type="ECO:0000269" key="6">
    <source>
    </source>
</evidence>
<evidence type="ECO:0000269" key="7">
    <source>
    </source>
</evidence>
<evidence type="ECO:0000269" key="8">
    <source>
    </source>
</evidence>
<evidence type="ECO:0000269" key="9">
    <source>
    </source>
</evidence>
<evidence type="ECO:0000269" key="10">
    <source>
    </source>
</evidence>
<evidence type="ECO:0000269" key="11">
    <source>
    </source>
</evidence>
<evidence type="ECO:0000269" key="12">
    <source>
    </source>
</evidence>
<evidence type="ECO:0000269" key="13">
    <source>
    </source>
</evidence>
<evidence type="ECO:0000269" key="14">
    <source>
    </source>
</evidence>
<evidence type="ECO:0000269" key="15">
    <source>
    </source>
</evidence>
<evidence type="ECO:0000269" key="16">
    <source>
    </source>
</evidence>
<evidence type="ECO:0000269" key="17">
    <source>
    </source>
</evidence>
<evidence type="ECO:0000269" key="18">
    <source>
    </source>
</evidence>
<evidence type="ECO:0000269" key="19">
    <source>
    </source>
</evidence>
<evidence type="ECO:0000269" key="20">
    <source>
    </source>
</evidence>
<evidence type="ECO:0000269" key="21">
    <source>
    </source>
</evidence>
<evidence type="ECO:0000269" key="22">
    <source>
    </source>
</evidence>
<evidence type="ECO:0000269" key="23">
    <source>
    </source>
</evidence>
<evidence type="ECO:0000269" key="24">
    <source>
    </source>
</evidence>
<evidence type="ECO:0000269" key="25">
    <source ref="25"/>
</evidence>
<evidence type="ECO:0000303" key="26">
    <source>
    </source>
</evidence>
<evidence type="ECO:0000303" key="27">
    <source>
    </source>
</evidence>
<evidence type="ECO:0000303" key="28">
    <source>
    </source>
</evidence>
<evidence type="ECO:0000303" key="29">
    <source>
    </source>
</evidence>
<evidence type="ECO:0000305" key="30"/>
<evidence type="ECO:0000305" key="31">
    <source>
    </source>
</evidence>
<evidence type="ECO:0000305" key="32">
    <source>
    </source>
</evidence>
<evidence type="ECO:0000305" key="33">
    <source>
    </source>
</evidence>
<evidence type="ECO:0000305" key="34">
    <source>
    </source>
</evidence>
<evidence type="ECO:0000305" key="35">
    <source>
    </source>
</evidence>
<evidence type="ECO:0000305" key="36">
    <source>
    </source>
</evidence>
<evidence type="ECO:0000305" key="37">
    <source>
    </source>
</evidence>
<evidence type="ECO:0000305" key="38">
    <source>
    </source>
</evidence>
<evidence type="ECO:0000305" key="39">
    <source ref="25"/>
</evidence>
<evidence type="ECO:0000305" key="40">
    <source ref="26"/>
</evidence>
<evidence type="ECO:0007744" key="41">
    <source>
        <dbReference type="PDB" id="2KDC"/>
    </source>
</evidence>
<evidence type="ECO:0007744" key="42">
    <source>
        <dbReference type="PDB" id="3ZE3"/>
    </source>
</evidence>
<evidence type="ECO:0007744" key="43">
    <source>
        <dbReference type="PDB" id="3ZE4"/>
    </source>
</evidence>
<evidence type="ECO:0007744" key="44">
    <source>
        <dbReference type="PDB" id="3ZE5"/>
    </source>
</evidence>
<evidence type="ECO:0007744" key="45">
    <source>
        <dbReference type="PDB" id="4BPD"/>
    </source>
</evidence>
<evidence type="ECO:0007744" key="46">
    <source>
        <dbReference type="PDB" id="4BRB"/>
    </source>
</evidence>
<evidence type="ECO:0007744" key="47">
    <source>
        <dbReference type="PDB" id="4BRR"/>
    </source>
</evidence>
<evidence type="ECO:0007744" key="48">
    <source>
        <dbReference type="PDB" id="4CJZ"/>
    </source>
</evidence>
<evidence type="ECO:0007744" key="49">
    <source>
        <dbReference type="PDB" id="4CK0"/>
    </source>
</evidence>
<evidence type="ECO:0007744" key="50">
    <source>
        <dbReference type="PDB" id="4D2E"/>
    </source>
</evidence>
<evidence type="ECO:0007744" key="51">
    <source>
        <dbReference type="PDB" id="4UP6"/>
    </source>
</evidence>
<evidence type="ECO:0007744" key="52">
    <source>
        <dbReference type="PDB" id="4UXW"/>
    </source>
</evidence>
<evidence type="ECO:0007744" key="53">
    <source>
        <dbReference type="PDB" id="4UXX"/>
    </source>
</evidence>
<evidence type="ECO:0007744" key="54">
    <source>
        <dbReference type="PDB" id="4UXZ"/>
    </source>
</evidence>
<evidence type="ECO:0007744" key="55">
    <source>
        <dbReference type="PDB" id="4UYO"/>
    </source>
</evidence>
<evidence type="ECO:0007744" key="56">
    <source>
        <dbReference type="PDB" id="5D56"/>
    </source>
</evidence>
<evidence type="ECO:0007744" key="57">
    <source>
        <dbReference type="PDB" id="5D57"/>
    </source>
</evidence>
<evidence type="ECO:0007744" key="58">
    <source>
        <dbReference type="PDB" id="5D6I"/>
    </source>
</evidence>
<evidence type="ECO:0007744" key="59">
    <source>
        <dbReference type="PDB" id="5DWK"/>
    </source>
</evidence>
<evidence type="ECO:0007829" key="60">
    <source>
        <dbReference type="PDB" id="3ZE3"/>
    </source>
</evidence>
<feature type="initiator methionine" description="Removed" evidence="16">
    <location>
        <position position="1"/>
    </location>
</feature>
<feature type="chain" id="PRO_0000195260" description="Diacylglycerol kinase">
    <location>
        <begin position="2"/>
        <end position="122"/>
    </location>
</feature>
<feature type="topological domain" description="Cytoplasmic" evidence="22">
    <location>
        <begin position="2"/>
        <end position="31"/>
    </location>
</feature>
<feature type="transmembrane region" description="Helical" evidence="31 38">
    <location>
        <begin position="32"/>
        <end position="48"/>
    </location>
</feature>
<feature type="topological domain" description="Periplasmic" evidence="31 38">
    <location>
        <begin position="49"/>
        <end position="51"/>
    </location>
</feature>
<feature type="transmembrane region" description="Helical" evidence="31 38">
    <location>
        <begin position="52"/>
        <end position="69"/>
    </location>
</feature>
<feature type="topological domain" description="Cytoplasmic" evidence="38">
    <location>
        <begin position="70"/>
        <end position="95"/>
    </location>
</feature>
<feature type="transmembrane region" description="Helical" evidence="38">
    <location>
        <begin position="96"/>
        <end position="119"/>
    </location>
</feature>
<feature type="topological domain" description="Periplasmic" evidence="4 22">
    <location>
        <begin position="120"/>
        <end position="122"/>
    </location>
</feature>
<feature type="active site" description="Proton acceptor" evidence="35">
    <location>
        <position position="70"/>
    </location>
</feature>
<feature type="binding site" evidence="35 40">
    <location>
        <position position="10"/>
    </location>
    <ligand>
        <name>ATP</name>
        <dbReference type="ChEBI" id="CHEBI:30616"/>
    </ligand>
</feature>
<feature type="binding site" evidence="33 35 36">
    <location>
        <position position="10"/>
    </location>
    <ligand>
        <name>substrate</name>
    </ligand>
</feature>
<feature type="binding site" evidence="32 33 36 37">
    <location>
        <begin position="14"/>
        <end position="19"/>
    </location>
    <ligand>
        <name>substrate</name>
    </ligand>
</feature>
<feature type="binding site" evidence="35 40">
    <location>
        <position position="17"/>
    </location>
    <ligand>
        <name>ATP</name>
        <dbReference type="ChEBI" id="CHEBI:30616"/>
    </ligand>
</feature>
<feature type="binding site" evidence="32 33 34 35 37">
    <location>
        <begin position="23"/>
        <end position="26"/>
    </location>
    <ligand>
        <name>substrate</name>
    </ligand>
</feature>
<feature type="binding site" evidence="10 11 12 13 14 25">
    <location>
        <position position="29"/>
    </location>
    <ligand>
        <name>a divalent metal cation</name>
        <dbReference type="ChEBI" id="CHEBI:60240"/>
    </ligand>
</feature>
<feature type="binding site" evidence="35 40">
    <location>
        <position position="29"/>
    </location>
    <ligand>
        <name>ATP</name>
        <dbReference type="ChEBI" id="CHEBI:30616"/>
    </ligand>
</feature>
<feature type="binding site" evidence="32 33 34 35 36 37">
    <location>
        <begin position="31"/>
        <end position="35"/>
    </location>
    <ligand>
        <name>substrate</name>
    </ligand>
</feature>
<feature type="binding site" evidence="32 33 35 36 37 39">
    <location>
        <begin position="48"/>
        <end position="51"/>
    </location>
    <ligand>
        <name>substrate</name>
    </ligand>
</feature>
<feature type="binding site" evidence="32 33 34 35 36 37 39">
    <location>
        <position position="56"/>
    </location>
    <ligand>
        <name>substrate</name>
    </ligand>
</feature>
<feature type="binding site" evidence="33 35 36 37 40">
    <location>
        <position position="70"/>
    </location>
    <ligand>
        <name>substrate</name>
    </ligand>
</feature>
<feature type="binding site" evidence="10 11 12 13 14 25">
    <location>
        <position position="77"/>
    </location>
    <ligand>
        <name>a divalent metal cation</name>
        <dbReference type="ChEBI" id="CHEBI:60240"/>
    </ligand>
</feature>
<feature type="binding site" evidence="35 40">
    <location>
        <position position="77"/>
    </location>
    <ligand>
        <name>ATP</name>
        <dbReference type="ChEBI" id="CHEBI:30616"/>
    </ligand>
</feature>
<feature type="binding site" evidence="35 40">
    <location>
        <begin position="86"/>
        <end position="88"/>
    </location>
    <ligand>
        <name>ATP</name>
        <dbReference type="ChEBI" id="CHEBI:30616"/>
    </ligand>
</feature>
<feature type="binding site" evidence="35 40">
    <location>
        <begin position="95"/>
        <end position="96"/>
    </location>
    <ligand>
        <name>ATP</name>
        <dbReference type="ChEBI" id="CHEBI:30616"/>
    </ligand>
</feature>
<feature type="binding site" evidence="32 33 35 36 37">
    <location>
        <position position="99"/>
    </location>
    <ligand>
        <name>substrate</name>
    </ligand>
</feature>
<feature type="binding site" evidence="32 33 34 35 36 37 40">
    <location>
        <begin position="113"/>
        <end position="118"/>
    </location>
    <ligand>
        <name>substrate</name>
    </ligand>
</feature>
<feature type="mutagenesis site" description="49% of wild-type specific activity. Inactivates wild-type subunits; when associated with S-73." evidence="2">
    <original>A</original>
    <variation>Q</variation>
    <location>
        <position position="15"/>
    </location>
</feature>
<feature type="mutagenesis site" description="60% of wild-type activity. 41% of wild-type activity; when associated with L-26." evidence="3">
    <original>W</original>
    <variation>L</variation>
    <location>
        <position position="19"/>
    </location>
</feature>
<feature type="mutagenesis site" description="23% of wild-type activity. 41% of wild-type activity; when associated with L-19." evidence="3">
    <original>W</original>
    <variation>L</variation>
    <location>
        <position position="26"/>
    </location>
</feature>
<feature type="mutagenesis site" description="93% decrease in activity." evidence="12">
    <original>A</original>
    <variation>L</variation>
    <location>
        <position position="31"/>
    </location>
</feature>
<feature type="mutagenesis site" description="Loss of activity." evidence="12">
    <original>E</original>
    <variation>A</variation>
    <variation>D</variation>
    <variation>Q</variation>
    <location>
        <position position="70"/>
    </location>
</feature>
<feature type="mutagenesis site" description="50% of wild-type specific activity." evidence="2">
    <original>E</original>
    <variation>C</variation>
    <location>
        <position position="70"/>
    </location>
</feature>
<feature type="mutagenesis site" description="Loss of activity." evidence="12">
    <original>N</original>
    <variation>A</variation>
    <variation>Q</variation>
    <variation>D</variation>
    <location>
        <position position="73"/>
    </location>
</feature>
<feature type="mutagenesis site" description="51% of wild-type specific activity. Inactivates wild-type subunits; when associated with Q-15." evidence="2">
    <original>N</original>
    <variation>S</variation>
    <location>
        <position position="73"/>
    </location>
</feature>
<feature type="mutagenesis site" description="51% of wild-type specific activity." evidence="2">
    <original>E</original>
    <variation>L</variation>
    <location>
        <position position="77"/>
    </location>
</feature>
<feature type="mutagenesis site" description="Loss of activity." evidence="12">
    <original>G</original>
    <variation>P</variation>
    <location>
        <position position="84"/>
    </location>
</feature>
<feature type="mutagenesis site" description="54% of wild-type specific activity." evidence="2">
    <original>K</original>
    <variation>L</variation>
    <location>
        <position position="95"/>
    </location>
</feature>
<feature type="mutagenesis site" description="Loss of activity." evidence="12">
    <original>D</original>
    <variation>A</variation>
    <location>
        <position position="96"/>
    </location>
</feature>
<feature type="mutagenesis site" description="76% decrease in activity." evidence="12">
    <original>D</original>
    <variation>E</variation>
    <location>
        <position position="96"/>
    </location>
</feature>
<feature type="mutagenesis site" description="27% of wild-type specific activity. Inactivates wild-type subunits. Almost no change in activity." evidence="2 12">
    <original>D</original>
    <variation>N</variation>
    <location>
        <position position="96"/>
    </location>
</feature>
<feature type="helix" evidence="60">
    <location>
        <begin position="8"/>
        <end position="28"/>
    </location>
</feature>
<feature type="helix" evidence="60">
    <location>
        <begin position="30"/>
        <end position="48"/>
    </location>
</feature>
<feature type="helix" evidence="60">
    <location>
        <begin position="53"/>
        <end position="83"/>
    </location>
</feature>
<feature type="helix" evidence="60">
    <location>
        <begin position="89"/>
        <end position="120"/>
    </location>
</feature>
<reference key="1">
    <citation type="journal article" date="1983" name="J. Biol. Chem.">
        <title>The DNA sequences encoding plsB and dgk loci of Escherichia coli.</title>
        <authorList>
            <person name="Lightner V.A."/>
            <person name="Bell R.M."/>
            <person name="Modrich P."/>
        </authorList>
    </citation>
    <scope>NUCLEOTIDE SEQUENCE [GENOMIC DNA]</scope>
</reference>
<reference key="2">
    <citation type="journal article" date="1993" name="Nucleic Acids Res.">
        <title>Analysis of the Escherichia coli genome. IV. DNA sequence of the region from 89.2 to 92.8 minutes.</title>
        <authorList>
            <person name="Blattner F.R."/>
            <person name="Burland V.D."/>
            <person name="Plunkett G. III"/>
            <person name="Sofia H.J."/>
            <person name="Daniels D.L."/>
        </authorList>
    </citation>
    <scope>NUCLEOTIDE SEQUENCE [LARGE SCALE GENOMIC DNA]</scope>
    <source>
        <strain>K12 / MG1655 / ATCC 47076</strain>
    </source>
</reference>
<reference key="3">
    <citation type="journal article" date="1997" name="Science">
        <title>The complete genome sequence of Escherichia coli K-12.</title>
        <authorList>
            <person name="Blattner F.R."/>
            <person name="Plunkett G. III"/>
            <person name="Bloch C.A."/>
            <person name="Perna N.T."/>
            <person name="Burland V."/>
            <person name="Riley M."/>
            <person name="Collado-Vides J."/>
            <person name="Glasner J.D."/>
            <person name="Rode C.K."/>
            <person name="Mayhew G.F."/>
            <person name="Gregor J."/>
            <person name="Davis N.W."/>
            <person name="Kirkpatrick H.A."/>
            <person name="Goeden M.A."/>
            <person name="Rose D.J."/>
            <person name="Mau B."/>
            <person name="Shao Y."/>
        </authorList>
    </citation>
    <scope>NUCLEOTIDE SEQUENCE [LARGE SCALE GENOMIC DNA]</scope>
    <source>
        <strain>K12 / MG1655 / ATCC 47076</strain>
    </source>
</reference>
<reference key="4">
    <citation type="journal article" date="2006" name="Mol. Syst. Biol.">
        <title>Highly accurate genome sequences of Escherichia coli K-12 strains MG1655 and W3110.</title>
        <authorList>
            <person name="Hayashi K."/>
            <person name="Morooka N."/>
            <person name="Yamamoto Y."/>
            <person name="Fujita K."/>
            <person name="Isono K."/>
            <person name="Choi S."/>
            <person name="Ohtsubo E."/>
            <person name="Baba T."/>
            <person name="Wanner B.L."/>
            <person name="Mori H."/>
            <person name="Horiuchi T."/>
        </authorList>
    </citation>
    <scope>NUCLEOTIDE SEQUENCE [LARGE SCALE GENOMIC DNA]</scope>
    <source>
        <strain>K12 / W3110 / ATCC 27325 / DSM 5911</strain>
    </source>
</reference>
<reference key="5">
    <citation type="journal article" date="1985" name="J. Biol. Chem.">
        <title>sn-1,2-Diacylglycerol kinase of Escherichia coli. Purification, reconstitution, and partial amino- and carboxyl-terminal analysis.</title>
        <authorList>
            <person name="Loomis C.R."/>
            <person name="Walsh J.P."/>
            <person name="Bell R.M."/>
        </authorList>
    </citation>
    <scope>PROTEIN SEQUENCE OF 2-3 AND 121</scope>
    <scope>IDENTIFICATION OF PROTEIN</scope>
    <scope>FUNCTION</scope>
    <scope>CATALYTIC ACTIVITY</scope>
    <scope>ACTIVITY REGULATION</scope>
    <scope>SUBCELLULAR LOCATION</scope>
</reference>
<reference key="6">
    <citation type="journal article" date="1978" name="J. Biol. Chem.">
        <title>Neutral lipid accumulation in the membranes of Escherichia coli mutants lacking diglyceride kinase.</title>
        <authorList>
            <person name="Raetz C.R."/>
            <person name="Newman K.F."/>
        </authorList>
    </citation>
    <scope>DISRUPTION PHENOTYPE</scope>
</reference>
<reference key="7">
    <citation type="journal article" date="1979" name="J. Bacteriol.">
        <title>Diglyceride kinase mutants of Escherichia coli: inner membrane association of 1,2-diglyceride and its relation to synthesis of membrane-derived oligosaccharides.</title>
        <authorList>
            <person name="Raetz C.R."/>
            <person name="Newman K.F."/>
        </authorList>
    </citation>
    <scope>FUNCTION</scope>
    <scope>SUBCELLULAR LOCATION</scope>
    <scope>DISRUPTION PHENOTYPE</scope>
</reference>
<reference key="8">
    <citation type="journal article" date="1979" name="Eur. J. Biochem.">
        <title>Diglyceride kinase from Escherichia coli. Purification in organic solvent and some properties of the enzyme.</title>
        <authorList>
            <person name="Bohnenberger E."/>
            <person name="Sandermann H. Jr."/>
        </authorList>
    </citation>
    <scope>FUNCTION</scope>
    <scope>CATALYTIC ACTIVITY</scope>
    <scope>BIOPHYSICOCHEMICAL PROPERTIES</scope>
</reference>
<reference key="9">
    <citation type="journal article" date="1982" name="Biochim. Biophys. Acta">
        <title>Diglyceride kinase from Escherichia coli. Modulation of enzyme activity by glycosphingolipids.</title>
        <authorList>
            <person name="Bohnenberger E."/>
            <person name="Sandermann H. Jr."/>
        </authorList>
    </citation>
    <scope>FUNCTION</scope>
    <scope>CATALYTIC ACTIVITY</scope>
    <scope>ACTIVITY REGULATION</scope>
</reference>
<reference key="10">
    <citation type="journal article" date="1983" name="Eur. J. Biochem.">
        <title>Lipid dependence of diacylglycerol kinase from Escherichia coli.</title>
        <authorList>
            <person name="Bohnenberger E."/>
            <person name="Sandermann H. Jr."/>
        </authorList>
    </citation>
    <scope>FUNCTION</scope>
    <scope>CATALYTIC ACTIVITY</scope>
    <scope>ACTIVITY REGULATION</scope>
</reference>
<reference key="11">
    <citation type="journal article" date="1983" name="J. Biol. Chem.">
        <title>Appearance of monoglyceride and triglyceride in the cell envelope of Escherichia coli mutants defective in diglyceride kinase.</title>
        <authorList>
            <person name="Rotering H."/>
            <person name="Raetz C.R."/>
        </authorList>
    </citation>
    <scope>FUNCTION</scope>
    <scope>DISRUPTION PHENOTYPE</scope>
</reference>
<reference key="12">
    <citation type="journal article" date="1986" name="J. Biol. Chem.">
        <title>sn-1,2-Diacylglycerol kinase of Escherichia coli. Mixed micellar analysis of the phospholipid cofactor requirement and divalent cation dependence.</title>
        <authorList>
            <person name="Walsh J.P."/>
            <person name="Bell R.M."/>
        </authorList>
    </citation>
    <scope>FUNCTION</scope>
    <scope>CATALYTIC ACTIVITY</scope>
    <scope>COFACTOR</scope>
    <scope>ACTIVITY REGULATION</scope>
    <scope>BIOPHYSICOCHEMICAL PROPERTIES</scope>
</reference>
<reference key="13">
    <citation type="journal article" date="1986" name="J. Biol. Chem.">
        <title>sn-1,2-Diacylglycerol kinase of Escherichia coli. Structural and kinetic analysis of the lipid cofactor dependence.</title>
        <authorList>
            <person name="Walsh J.P."/>
            <person name="Bell R.M."/>
        </authorList>
    </citation>
    <scope>FUNCTION</scope>
    <scope>CATALYTIC ACTIVITY</scope>
    <scope>ACTIVITY REGULATION</scope>
</reference>
<reference key="14">
    <citation type="journal article" date="1988" name="Eur. J. Biochem.">
        <title>Lipid-dependent membrane enzymes. Purification to homogeneity and further characterization of diacylglycerol kinase from Escherichia coli.</title>
        <authorList>
            <person name="Russ E."/>
            <person name="Kaiser U."/>
            <person name="Sandermann H. Jr."/>
        </authorList>
    </citation>
    <scope>FUNCTION</scope>
    <scope>CATALYTIC ACTIVITY</scope>
    <scope>ACTIVITY REGULATION</scope>
    <scope>BIOPHYSICOCHEMICAL PROPERTIES</scope>
</reference>
<reference key="15">
    <citation type="journal article" date="1994" name="J. Bacteriol.">
        <title>Membrane topology of Escherichia coli diacylglycerol kinase.</title>
        <authorList>
            <person name="Smith R.L."/>
            <person name="O'Toole J.F."/>
            <person name="Maguire M.E."/>
            <person name="Sanders C.R. II"/>
        </authorList>
    </citation>
    <scope>TOPOLOGY</scope>
    <scope>SUBCELLULAR LOCATION</scope>
</reference>
<reference key="16">
    <citation type="journal article" date="1997" name="Biophys. J.">
        <title>Escherichia coli diacylglycerol kinase: a case study in the application of solution NMR methods to an integral membrane protein.</title>
        <authorList>
            <person name="Vinogradova O."/>
            <person name="Badola P."/>
            <person name="Czerski L."/>
            <person name="Soennichsen F.D."/>
            <person name="Sanders C.R. II"/>
        </authorList>
    </citation>
    <scope>SUBUNIT</scope>
</reference>
<reference key="17">
    <citation type="journal article" date="1997" name="J. Biol. Chem.">
        <title>Escherichia coli diacylglycerol kinase is an evolutionarily optimized membrane enzyme and catalyzes direct phosphoryl transfer.</title>
        <authorList>
            <person name="Badola P."/>
            <person name="Sanders C.R. II"/>
        </authorList>
    </citation>
    <scope>FUNCTION</scope>
    <scope>CATALYTIC ACTIVITY</scope>
    <scope>REACTION MECHANISM</scope>
    <scope>ACTIVITY REGULATION</scope>
</reference>
<reference key="18">
    <citation type="journal article" date="1999" name="Biochemistry">
        <title>Active sites of diacylglycerol kinase from Escherichia coli are shared between subunits.</title>
        <authorList>
            <person name="Lau F.W."/>
            <person name="Chen X."/>
            <person name="Bowie J.U."/>
        </authorList>
    </citation>
    <scope>DOMAIN</scope>
    <scope>BIOPHYSICOCHEMICAL PROPERTIES</scope>
    <scope>MUTAGENESIS OF ALA-15; GLU-70; ASN-73; GLU-77; LYS-95 AND ASP-96</scope>
</reference>
<reference key="19">
    <citation type="journal article" date="2002" name="Biochemistry">
        <title>Topology and secondary structure of the N-terminal domain of diacylglycerol kinase.</title>
        <authorList>
            <person name="Oxenoid K."/>
            <person name="Soennichsen F.D."/>
            <person name="Sanders C.R."/>
        </authorList>
    </citation>
    <scope>TOPOLOGY OF THE N-TERMINAL REGION</scope>
</reference>
<reference key="20">
    <citation type="journal article" date="2003" name="Biochemistry">
        <title>The role of tryptophan residues in an integral membrane protein: diacylglycerol kinase.</title>
        <authorList>
            <person name="Clark E.H."/>
            <person name="East J.M."/>
            <person name="Lee A.G."/>
        </authorList>
    </citation>
    <scope>DOMAIN</scope>
    <scope>MUTAGENESIS OF TRP-19 AND TRP-26</scope>
</reference>
<reference key="21">
    <citation type="journal article" date="2005" name="Science">
        <title>Global topology analysis of the Escherichia coli inner membrane proteome.</title>
        <authorList>
            <person name="Daley D.O."/>
            <person name="Rapp M."/>
            <person name="Granseth E."/>
            <person name="Melen K."/>
            <person name="Drew D."/>
            <person name="von Heijne G."/>
        </authorList>
    </citation>
    <scope>TOPOLOGY [LARGE SCALE ANALYSIS]</scope>
    <scope>SUBCELLULAR LOCATION</scope>
    <source>
        <strain>K12 / MG1655 / ATCC 47076</strain>
    </source>
</reference>
<reference key="22">
    <citation type="journal article" date="2011" name="Mol. Microbiol.">
        <title>Antagonistic regulation of dgkA and plsB genes of phospholipid synthesis by multiple stress responses in Escherichia coli.</title>
        <authorList>
            <person name="Wahl A."/>
            <person name="My L."/>
            <person name="Dumoulin R."/>
            <person name="Sturgis J.N."/>
            <person name="Bouveret E."/>
        </authorList>
    </citation>
    <scope>TRANSCRIPTIONAL REGULATION</scope>
</reference>
<reference evidence="41" key="23">
    <citation type="journal article" date="2009" name="Science">
        <title>Solution nuclear magnetic resonance structure of membrane-integral diacylglycerol kinase.</title>
        <authorList>
            <person name="Van Horn W.D."/>
            <person name="Kim H.J."/>
            <person name="Ellis C.D."/>
            <person name="Hadziselimovic A."/>
            <person name="Sulistijo E.S."/>
            <person name="Karra M.D."/>
            <person name="Tian C."/>
            <person name="Sonnichsen F.D."/>
            <person name="Sanders C.R."/>
        </authorList>
    </citation>
    <scope>STRUCTURE BY NMR OF 2-122</scope>
    <scope>SUBUNIT</scope>
</reference>
<reference evidence="42 43 44" key="24">
    <citation type="journal article" date="2013" name="Nature">
        <title>Crystal structure of the integral membrane diacylglycerol kinase.</title>
        <authorList>
            <person name="Li D."/>
            <person name="Lyons J.A."/>
            <person name="Pye V.E."/>
            <person name="Vogeley L."/>
            <person name="Aragao D."/>
            <person name="Kenyon C.P."/>
            <person name="Shah S.T."/>
            <person name="Doherty C."/>
            <person name="Aherne M."/>
            <person name="Caffrey M."/>
        </authorList>
    </citation>
    <scope>X-RAY CRYSTALLOGRAPHY (2.05 ANGSTROMS) OF 2-122 OF APOENZYME AND IN COMPLEX WITH ZINC AND 7.8 MONOACYLGLYCEROL</scope>
    <scope>SUBUNIT</scope>
    <scope>DOMAIN</scope>
</reference>
<reference evidence="47" key="25">
    <citation type="submission" date="2013-06" db="PDB data bank">
        <title>Crystal structure of an integral membrane enzyme determined by X-ray free electron laser femtocrystallography.</title>
        <authorList>
            <person name="Li D."/>
            <person name="Howe N."/>
            <person name="Caffrey M."/>
        </authorList>
    </citation>
    <scope>X-RAY CRYSTALLOGRAPHY (2.44 ANGSTROMS) OF 2-122 IN COMPLEX WITH ZINC AND SUBSTRATE ANALOG</scope>
</reference>
<reference evidence="48 49" key="26">
    <citation type="submission" date="2013-12" db="PDB data bank">
        <title>Crystal structure of the integral membrane diacylglycerol kinase with Zn-Amppcp bound and its catalytic mechanism.</title>
        <authorList>
            <person name="Li D."/>
            <person name="Caffrey M."/>
        </authorList>
    </citation>
    <scope>X-RAY CRYSTALLOGRAPHY (2.92 ANGSTROMS) OF 2-122 IN COMPLEXES WITH ZINC; OLEOYL-R-GLYCEROL AND ATP ANALOG</scope>
</reference>
<reference evidence="45 50" key="27">
    <citation type="journal article" date="2014" name="Cell. Mol. Life Sci.">
        <title>Cell-free expression and in meso crystallisation of an integral membrane kinase for structure determination.</title>
        <authorList>
            <person name="Boland C."/>
            <person name="Li D."/>
            <person name="Shah S.T.A."/>
            <person name="Haberstock S."/>
            <person name="Dotsch V."/>
            <person name="Bernhard F."/>
            <person name="Caffrey M."/>
        </authorList>
    </citation>
    <scope>X-RAY CRYSTALLOGRAPHY (2.28 ANGSTROMS) OF 2-122 IN COMPLEXES WITH ZINC AND 7.8 MONOACYLGLYCEROL</scope>
    <scope>SUBUNIT</scope>
</reference>
<reference evidence="46 51" key="28">
    <citation type="journal article" date="2014" name="Sci. Rep.">
        <title>Renaturing membrane proteins in the lipid cubic phase, a nanoporous membrane mimetic.</title>
        <authorList>
            <person name="Li D."/>
            <person name="Caffrey M."/>
        </authorList>
    </citation>
    <scope>X-RAY CRYSTALLOGRAPHY (2.55 ANGSTROMS) OF 2-122 OF APOENZYME AND IN COMPLEX WITH ZINC AND 7.8 MONOACYLGLYCEROL</scope>
</reference>
<reference evidence="52 53 54 55" key="29">
    <citation type="journal article" date="2015" name="Nat. Commun.">
        <title>Ternary structure reveals mechanism of a membrane diacylglycerol kinase.</title>
        <authorList>
            <person name="Li D."/>
            <person name="Stansfeld P.J."/>
            <person name="Sansom M.S.P."/>
            <person name="Keogh A."/>
            <person name="Vogeley L."/>
            <person name="Howe N."/>
            <person name="Lyons J.A."/>
            <person name="Aragao D."/>
            <person name="Fromme P."/>
            <person name="Fromme R."/>
            <person name="Basu S."/>
            <person name="Grotjohann I."/>
            <person name="Kupitz C."/>
            <person name="Rendek K."/>
            <person name="Weierstall U."/>
            <person name="Zatsepin N.A."/>
            <person name="Cherezov V."/>
            <person name="Liu W."/>
            <person name="Bandaru S."/>
            <person name="English N.J."/>
            <person name="Gati C."/>
            <person name="Barty A."/>
            <person name="Yefanov O."/>
            <person name="Chapman H.N."/>
            <person name="Diederichs K."/>
            <person name="Messerschmidt M."/>
            <person name="Boutet S."/>
            <person name="Williams G.J."/>
            <person name="Marvin Seibert M."/>
            <person name="Caffrey M."/>
        </authorList>
    </citation>
    <scope>X-RAY CRYSTALLOGRAPHY (2.18 ANGSTROMS) OF 2-122 IN COMPLEXES WITH ZINC; MONOACYLGLYCEROLS AND ATP ANALOG</scope>
    <scope>REACTION MECHANISM</scope>
    <scope>SUBUNIT</scope>
    <scope>DOMAIN</scope>
    <scope>ACTIVE SITE</scope>
    <scope>MUTAGENESIS OF ALA-31; GLU-70; ASN-73; GLY-84 AND ASP-96</scope>
</reference>
<reference evidence="59" key="30">
    <citation type="journal article" date="2016" name="Acta Crystallogr. D">
        <title>Data-collection strategy for challenging native SAD phasing.</title>
        <authorList>
            <person name="Olieric V."/>
            <person name="Weinert T."/>
            <person name="Finke A.D."/>
            <person name="Anders C."/>
            <person name="Li D."/>
            <person name="Olieric N."/>
            <person name="Borca C.N."/>
            <person name="Steinmetz M.O."/>
            <person name="Caffrey M."/>
            <person name="Jinek M."/>
            <person name="Wang M."/>
        </authorList>
    </citation>
    <scope>X-RAY CRYSTALLOGRAPHY (2.60 ANGSTROMS) OF 2-122 IN COMPLEX WITH ZINC AND 7.8 MONOACYLGLYCEROL</scope>
</reference>
<reference evidence="56 57" key="31">
    <citation type="journal article" date="2016" name="Acta Crystallogr. D">
        <title>In meso in situ serial X-ray crystallography of soluble and membrane proteins at cryogenic temperatures.</title>
        <authorList>
            <person name="Huang C.Y."/>
            <person name="Olieric V."/>
            <person name="Ma P."/>
            <person name="Howe N."/>
            <person name="Vogeley L."/>
            <person name="Liu X."/>
            <person name="Warshamanage R."/>
            <person name="Weinert T."/>
            <person name="Panepucci E."/>
            <person name="Kobilka B."/>
            <person name="Diederichs K."/>
            <person name="Wang M."/>
            <person name="Caffrey M."/>
        </authorList>
    </citation>
    <scope>X-RAY CRYSTALLOGRAPHY (2.80 ANGSTROMS) OF 2-122 IN COMPLEX WITH ZINC AND 7.8 MONOACYLGLYCEROL</scope>
</reference>
<reference evidence="58" key="32">
    <citation type="journal article" date="2017" name="Nat. Protoc.">
        <title>The cubicon method for concentrating membrane proteins in the cubic mesophase.</title>
        <authorList>
            <person name="Ma P."/>
            <person name="Weichert D."/>
            <person name="Aleksandrov L.A."/>
            <person name="Jensen T.J."/>
            <person name="Riordan J.R."/>
            <person name="Liu X."/>
            <person name="Kobilka B.K."/>
            <person name="Caffrey M."/>
        </authorList>
    </citation>
    <scope>X-RAY CRYSTALLOGRAPHY (3.09 ANGSTROMS)</scope>
</reference>
<dbReference type="EC" id="2.7.1.107" evidence="9 15 16 19 20 24"/>
<dbReference type="EMBL" id="K00127">
    <property type="protein sequence ID" value="AAA24394.1"/>
    <property type="molecule type" value="Genomic_DNA"/>
</dbReference>
<dbReference type="EMBL" id="U00006">
    <property type="protein sequence ID" value="AAC43136.1"/>
    <property type="molecule type" value="Genomic_DNA"/>
</dbReference>
<dbReference type="EMBL" id="U00096">
    <property type="protein sequence ID" value="AAC77012.1"/>
    <property type="molecule type" value="Genomic_DNA"/>
</dbReference>
<dbReference type="EMBL" id="AP009048">
    <property type="protein sequence ID" value="BAE78044.1"/>
    <property type="molecule type" value="Genomic_DNA"/>
</dbReference>
<dbReference type="PIR" id="A00667">
    <property type="entry name" value="KIECDG"/>
</dbReference>
<dbReference type="RefSeq" id="NP_418466.1">
    <property type="nucleotide sequence ID" value="NC_000913.3"/>
</dbReference>
<dbReference type="RefSeq" id="WP_000002907.1">
    <property type="nucleotide sequence ID" value="NZ_STEB01000022.1"/>
</dbReference>
<dbReference type="PDB" id="2KDC">
    <property type="method" value="NMR"/>
    <property type="chains" value="A/B/C=2-122"/>
</dbReference>
<dbReference type="PDB" id="3ZE3">
    <property type="method" value="X-ray"/>
    <property type="resolution" value="2.05 A"/>
    <property type="chains" value="A/B/C/D/E/F=2-122"/>
</dbReference>
<dbReference type="PDB" id="3ZE4">
    <property type="method" value="X-ray"/>
    <property type="resolution" value="3.70 A"/>
    <property type="chains" value="A/B/C=2-122"/>
</dbReference>
<dbReference type="PDB" id="3ZE5">
    <property type="method" value="X-ray"/>
    <property type="resolution" value="3.10 A"/>
    <property type="chains" value="A/B/C=2-122"/>
</dbReference>
<dbReference type="PDB" id="4BPD">
    <property type="method" value="X-ray"/>
    <property type="resolution" value="3.30 A"/>
    <property type="chains" value="A/B/C/D/E/F=2-122"/>
</dbReference>
<dbReference type="PDB" id="4BRB">
    <property type="method" value="X-ray"/>
    <property type="resolution" value="2.55 A"/>
    <property type="chains" value="A/B/C/D/E/F=2-122"/>
</dbReference>
<dbReference type="PDB" id="4BRR">
    <property type="method" value="X-ray"/>
    <property type="resolution" value="2.44 A"/>
    <property type="chains" value="A/B/C/D/E/F=2-122"/>
</dbReference>
<dbReference type="PDB" id="4CJZ">
    <property type="method" value="X-ray"/>
    <property type="resolution" value="3.25 A"/>
    <property type="chains" value="A/B/C=2-122"/>
</dbReference>
<dbReference type="PDB" id="4CK0">
    <property type="method" value="X-ray"/>
    <property type="resolution" value="2.92 A"/>
    <property type="chains" value="A/B/C=2-122"/>
</dbReference>
<dbReference type="PDB" id="4D2E">
    <property type="method" value="X-ray"/>
    <property type="resolution" value="2.28 A"/>
    <property type="chains" value="A/B/C/D/E/F=2-122"/>
</dbReference>
<dbReference type="PDB" id="4UP6">
    <property type="method" value="X-ray"/>
    <property type="resolution" value="3.80 A"/>
    <property type="chains" value="A/B/C=2-122"/>
</dbReference>
<dbReference type="PDB" id="4UXW">
    <property type="method" value="X-ray"/>
    <property type="resolution" value="3.15 A"/>
    <property type="chains" value="A/B/C=2-122"/>
</dbReference>
<dbReference type="PDB" id="4UXX">
    <property type="method" value="X-ray"/>
    <property type="resolution" value="2.70 A"/>
    <property type="chains" value="A/B/C=2-122"/>
</dbReference>
<dbReference type="PDB" id="4UXZ">
    <property type="method" value="X-ray"/>
    <property type="resolution" value="2.18 A"/>
    <property type="chains" value="A/B/C/D/E/F=2-122"/>
</dbReference>
<dbReference type="PDB" id="4UYO">
    <property type="method" value="X-ray"/>
    <property type="resolution" value="2.18 A"/>
    <property type="chains" value="A/B/C/D/E/F=2-122"/>
</dbReference>
<dbReference type="PDB" id="5D56">
    <property type="method" value="X-ray"/>
    <property type="resolution" value="2.80 A"/>
    <property type="chains" value="A/B/C/D/E/F=2-122"/>
</dbReference>
<dbReference type="PDB" id="5D57">
    <property type="method" value="X-ray"/>
    <property type="resolution" value="2.80 A"/>
    <property type="chains" value="A/B/C/D/E/F=2-122"/>
</dbReference>
<dbReference type="PDB" id="5D6I">
    <property type="method" value="X-ray"/>
    <property type="resolution" value="3.09 A"/>
    <property type="chains" value="A/B/C=2-122"/>
</dbReference>
<dbReference type="PDB" id="5DWK">
    <property type="method" value="X-ray"/>
    <property type="resolution" value="2.60 A"/>
    <property type="chains" value="A/B/C/D/E/F=2-122"/>
</dbReference>
<dbReference type="PDB" id="7DVM">
    <property type="method" value="NMR"/>
    <property type="chains" value="A/B/C=2-122"/>
</dbReference>
<dbReference type="PDBsum" id="2KDC"/>
<dbReference type="PDBsum" id="3ZE3"/>
<dbReference type="PDBsum" id="3ZE4"/>
<dbReference type="PDBsum" id="3ZE5"/>
<dbReference type="PDBsum" id="4BPD"/>
<dbReference type="PDBsum" id="4BRB"/>
<dbReference type="PDBsum" id="4BRR"/>
<dbReference type="PDBsum" id="4CJZ"/>
<dbReference type="PDBsum" id="4CK0"/>
<dbReference type="PDBsum" id="4D2E"/>
<dbReference type="PDBsum" id="4UP6"/>
<dbReference type="PDBsum" id="4UXW"/>
<dbReference type="PDBsum" id="4UXX"/>
<dbReference type="PDBsum" id="4UXZ"/>
<dbReference type="PDBsum" id="4UYO"/>
<dbReference type="PDBsum" id="5D56"/>
<dbReference type="PDBsum" id="5D57"/>
<dbReference type="PDBsum" id="5D6I"/>
<dbReference type="PDBsum" id="5DWK"/>
<dbReference type="PDBsum" id="7DVM"/>
<dbReference type="BMRB" id="P0ABN1"/>
<dbReference type="SMR" id="P0ABN1"/>
<dbReference type="BioGRID" id="4261719">
    <property type="interactions" value="281"/>
</dbReference>
<dbReference type="BioGRID" id="852837">
    <property type="interactions" value="2"/>
</dbReference>
<dbReference type="DIP" id="DIP-60228N"/>
<dbReference type="FunCoup" id="P0ABN1">
    <property type="interactions" value="287"/>
</dbReference>
<dbReference type="STRING" id="511145.b4042"/>
<dbReference type="SwissLipids" id="SLP:000001806"/>
<dbReference type="jPOST" id="P0ABN1"/>
<dbReference type="PaxDb" id="511145-b4042"/>
<dbReference type="EnsemblBacteria" id="AAC77012">
    <property type="protein sequence ID" value="AAC77012"/>
    <property type="gene ID" value="b4042"/>
</dbReference>
<dbReference type="GeneID" id="93777789"/>
<dbReference type="GeneID" id="948543"/>
<dbReference type="KEGG" id="ecj:JW4002"/>
<dbReference type="KEGG" id="eco:b4042"/>
<dbReference type="KEGG" id="ecoc:C3026_21845"/>
<dbReference type="PATRIC" id="fig|1411691.4.peg.2666"/>
<dbReference type="EchoBASE" id="EB0220"/>
<dbReference type="eggNOG" id="COG0818">
    <property type="taxonomic scope" value="Bacteria"/>
</dbReference>
<dbReference type="HOGENOM" id="CLU_112343_3_1_6"/>
<dbReference type="InParanoid" id="P0ABN1"/>
<dbReference type="OMA" id="NNATGLM"/>
<dbReference type="OrthoDB" id="9796011at2"/>
<dbReference type="PhylomeDB" id="P0ABN1"/>
<dbReference type="BioCyc" id="EcoCyc:DIACYLGLYKIN-MONOMER"/>
<dbReference type="BioCyc" id="MetaCyc:DIACYLGLYKIN-MONOMER"/>
<dbReference type="BRENDA" id="2.7.1.107">
    <property type="organism ID" value="2026"/>
</dbReference>
<dbReference type="SABIO-RK" id="P0ABN1"/>
<dbReference type="EvolutionaryTrace" id="P0ABN1"/>
<dbReference type="PRO" id="PR:P0ABN1"/>
<dbReference type="Proteomes" id="UP000000625">
    <property type="component" value="Chromosome"/>
</dbReference>
<dbReference type="GO" id="GO:0016020">
    <property type="term" value="C:membrane"/>
    <property type="evidence" value="ECO:0000314"/>
    <property type="project" value="EcoCyc"/>
</dbReference>
<dbReference type="GO" id="GO:0005886">
    <property type="term" value="C:plasma membrane"/>
    <property type="evidence" value="ECO:0000314"/>
    <property type="project" value="EcoCyc"/>
</dbReference>
<dbReference type="GO" id="GO:0005524">
    <property type="term" value="F:ATP binding"/>
    <property type="evidence" value="ECO:0007669"/>
    <property type="project" value="UniProtKB-KW"/>
</dbReference>
<dbReference type="GO" id="GO:0004143">
    <property type="term" value="F:ATP-dependent diacylglycerol kinase activity"/>
    <property type="evidence" value="ECO:0000314"/>
    <property type="project" value="EcoCyc"/>
</dbReference>
<dbReference type="GO" id="GO:0042802">
    <property type="term" value="F:identical protein binding"/>
    <property type="evidence" value="ECO:0000314"/>
    <property type="project" value="EcoCyc"/>
</dbReference>
<dbReference type="GO" id="GO:0001727">
    <property type="term" value="F:lipid kinase activity"/>
    <property type="evidence" value="ECO:0000318"/>
    <property type="project" value="GO_Central"/>
</dbReference>
<dbReference type="GO" id="GO:0046872">
    <property type="term" value="F:metal ion binding"/>
    <property type="evidence" value="ECO:0000314"/>
    <property type="project" value="EcoCyc"/>
</dbReference>
<dbReference type="GO" id="GO:0006654">
    <property type="term" value="P:phosphatidic acid biosynthetic process"/>
    <property type="evidence" value="ECO:0000315"/>
    <property type="project" value="EcoCyc"/>
</dbReference>
<dbReference type="GO" id="GO:0009411">
    <property type="term" value="P:response to UV"/>
    <property type="evidence" value="ECO:0000315"/>
    <property type="project" value="EcoCyc"/>
</dbReference>
<dbReference type="CDD" id="cd14264">
    <property type="entry name" value="DAGK_IM"/>
    <property type="match status" value="1"/>
</dbReference>
<dbReference type="FunFam" id="1.10.287.3610:FF:000001">
    <property type="entry name" value="Diacylglycerol kinase"/>
    <property type="match status" value="1"/>
</dbReference>
<dbReference type="Gene3D" id="1.10.287.3610">
    <property type="match status" value="1"/>
</dbReference>
<dbReference type="InterPro" id="IPR000829">
    <property type="entry name" value="DAGK"/>
</dbReference>
<dbReference type="InterPro" id="IPR033718">
    <property type="entry name" value="DAGK_prok"/>
</dbReference>
<dbReference type="InterPro" id="IPR036945">
    <property type="entry name" value="DAGK_sf"/>
</dbReference>
<dbReference type="PANTHER" id="PTHR34299">
    <property type="entry name" value="DIACYLGLYCEROL KINASE"/>
    <property type="match status" value="1"/>
</dbReference>
<dbReference type="PANTHER" id="PTHR34299:SF1">
    <property type="entry name" value="DIACYLGLYCEROL KINASE"/>
    <property type="match status" value="1"/>
</dbReference>
<dbReference type="Pfam" id="PF01219">
    <property type="entry name" value="DAGK_prokar"/>
    <property type="match status" value="1"/>
</dbReference>
<dbReference type="PROSITE" id="PS01069">
    <property type="entry name" value="DAGK_PROKAR"/>
    <property type="match status" value="1"/>
</dbReference>
<accession>P0ABN1</accession>
<accession>P00556</accession>
<accession>Q2M6R2</accession>
<comment type="function">
    <text evidence="8 9 15 16 17 18 19 20 21 24">Catalyzes the ATP-dependent phosphorylation of sn-l,2-diacylglycerol (DAG) to phosphatidic acid (PubMed:218816, PubMed:2828054, PubMed:2984194, PubMed:3009449, PubMed:6277376, PubMed:6303781, PubMed:9305868). Involved in the recycling of diacylglycerol produced as a by-product during membrane-derived oligosaccharide (MDO) biosynthesis (PubMed:217867, PubMed:6305970). In vitro, phosphorylates various substrates, including sn-1,2-dioleoylglycerol, sn-1,2-dioctanoylglycerol, sn-1,2-dipalmitoylglycerol, sn-1,2-dipalmitate and ceramide (PubMed:218816, PubMed:2828054, PubMed:2984194, PubMed:3009449, PubMed:3021764). Catalyzes direct phosphoryl transfer from Mg-ATP to diacylglycerol and does not form an enzyme-phosphate intermediate (PubMed:9305868).</text>
</comment>
<comment type="catalytic activity">
    <reaction evidence="9 15 16 19 20 24">
        <text>a 1,2-diacyl-sn-glycerol + ATP = a 1,2-diacyl-sn-glycero-3-phosphate + ADP + H(+)</text>
        <dbReference type="Rhea" id="RHEA:10272"/>
        <dbReference type="ChEBI" id="CHEBI:15378"/>
        <dbReference type="ChEBI" id="CHEBI:17815"/>
        <dbReference type="ChEBI" id="CHEBI:30616"/>
        <dbReference type="ChEBI" id="CHEBI:58608"/>
        <dbReference type="ChEBI" id="CHEBI:456216"/>
        <dbReference type="EC" id="2.7.1.107"/>
    </reaction>
    <physiologicalReaction direction="left-to-right" evidence="9 15 16 19 20 24">
        <dbReference type="Rhea" id="RHEA:10273"/>
    </physiologicalReaction>
</comment>
<comment type="catalytic activity">
    <reaction evidence="16 17 18">
        <text>1,2-di-(9Z-octadecenoyl)-sn-glycerol + ATP = 1,2-di-(9Z-octadecenoyl)-sn-glycero-3-phosphate + ADP + H(+)</text>
        <dbReference type="Rhea" id="RHEA:40327"/>
        <dbReference type="ChEBI" id="CHEBI:15378"/>
        <dbReference type="ChEBI" id="CHEBI:30616"/>
        <dbReference type="ChEBI" id="CHEBI:52333"/>
        <dbReference type="ChEBI" id="CHEBI:74546"/>
        <dbReference type="ChEBI" id="CHEBI:456216"/>
    </reaction>
    <physiologicalReaction direction="left-to-right" evidence="16 17 18">
        <dbReference type="Rhea" id="RHEA:40328"/>
    </physiologicalReaction>
</comment>
<comment type="cofactor">
    <cofactor evidence="17">
        <name>Mg(2+)</name>
        <dbReference type="ChEBI" id="CHEBI:18420"/>
    </cofactor>
    <text evidence="17">Mn(2+), Zn(2+), Cd(2+) and Co(2+) support activity to lesser extents.</text>
</comment>
<comment type="activity regulation">
    <text evidence="15 16 17 18 19 20 24">Requires a lipid activator for activity. Activation is observed with cardiolipin and a large number of phospholipids, sulfolipids, neutral lipids, fatty acids, alkylglycosides or detergents (PubMed:2828054, PubMed:2984194, PubMed:3009449, PubMed:3021764, PubMed:6277376, PubMed:6303781). A lipid cofactor-induced conformational change may occur as part of the activation process (PubMed:3021764). Requires a second divalent cation in addition to Mg(2+)-ATP (PubMed:3009449). Inhibited by the tetraphosphate-linked ATP-DAG bisubstrate analog (PubMed:9305868).</text>
</comment>
<comment type="biophysicochemical properties">
    <kinetics>
        <KM evidence="9">62 uM for sn-1,2-dipalmitate</KM>
        <KM evidence="9">230 uM for ceramide</KM>
        <KM evidence="9">1400 uM for ATP</KM>
        <KM evidence="17">300 uM for ATP</KM>
        <KM evidence="2">120 uM for ATP</KM>
        <Vmax evidence="17">10.4 umol/min/mg enzyme</Vmax>
        <Vmax evidence="2">48.0 umol/min/mg enzyme with DAG as substrate</Vmax>
    </kinetics>
    <phDependence>
        <text evidence="9">Optimum pH is 6.3-8.3.</text>
    </phDependence>
    <temperatureDependence>
        <text evidence="15">Apoprotein in organic solution has an unusual stability towards heating to 100 degrees Celsius.</text>
    </temperatureDependence>
</comment>
<comment type="subunit">
    <text evidence="5 10 11 12 23">Homotrimer.</text>
</comment>
<comment type="subcellular location">
    <subcellularLocation>
        <location evidence="4 8 16 22">Cell inner membrane</location>
        <topology evidence="1 22">Multi-pass membrane protein</topology>
    </subcellularLocation>
</comment>
<comment type="induction">
    <text evidence="7">Expression is activated by the two-component system BasRS. Repressed by sigma-E factor.</text>
</comment>
<comment type="domain">
    <text evidence="2 10 12">Contains three transmembrane helices and a N-terminal amphiphilic helix located on the cytoplasmic surface (PubMed:23676677, PubMed:26673816). Residues from different subunits participate in forming the active site (PubMed:10220339, PubMed:23676677). Contains three catalytic and substrate-binding sites centred about the membrane/cytosol interface (PubMed:26673816). The gamma-phosphate of the ATP is positioned for direct transfer to the primary hydroxyl of the lipid whose acyl chain is in the membrane (PubMed:26673816).</text>
</comment>
<comment type="domain">
    <text evidence="3">The presence of Trp residues has a clear effect on thermal stability. Of the mutants containing a single Trp residue, only that containing Trp-113 was found to give active protein.</text>
</comment>
<comment type="disruption phenotype">
    <text evidence="6 8 21">Mutant lacking this gene accumulates substantial amounts of diglyceride in the cytoplasmic membrane (PubMed:206553, PubMed:217867). Mutant also accumulates monoglyceride and triglyceride. Monoglyceride accumulates predominantly in the outer membrane, while triglyceride builds up together with diglyceride in the cytoplasmic membrane (PubMed:6305970).</text>
</comment>
<comment type="miscellaneous">
    <text evidence="30">This small kinase has long served as a model for investigating membrane protein enzymology, folding, assembly and stability.</text>
</comment>
<comment type="similarity">
    <text evidence="30">Belongs to the bacterial diacylglycerol kinase family.</text>
</comment>
<proteinExistence type="evidence at protein level"/>
<keyword id="KW-0002">3D-structure</keyword>
<keyword id="KW-0067">ATP-binding</keyword>
<keyword id="KW-0997">Cell inner membrane</keyword>
<keyword id="KW-1003">Cell membrane</keyword>
<keyword id="KW-0903">Direct protein sequencing</keyword>
<keyword id="KW-0418">Kinase</keyword>
<keyword id="KW-0444">Lipid biosynthesis</keyword>
<keyword id="KW-0443">Lipid metabolism</keyword>
<keyword id="KW-0460">Magnesium</keyword>
<keyword id="KW-0472">Membrane</keyword>
<keyword id="KW-0479">Metal-binding</keyword>
<keyword id="KW-0547">Nucleotide-binding</keyword>
<keyword id="KW-0594">Phospholipid biosynthesis</keyword>
<keyword id="KW-1208">Phospholipid metabolism</keyword>
<keyword id="KW-1185">Reference proteome</keyword>
<keyword id="KW-0808">Transferase</keyword>
<keyword id="KW-0812">Transmembrane</keyword>
<keyword id="KW-1133">Transmembrane helix</keyword>
<organism>
    <name type="scientific">Escherichia coli (strain K12)</name>
    <dbReference type="NCBI Taxonomy" id="83333"/>
    <lineage>
        <taxon>Bacteria</taxon>
        <taxon>Pseudomonadati</taxon>
        <taxon>Pseudomonadota</taxon>
        <taxon>Gammaproteobacteria</taxon>
        <taxon>Enterobacterales</taxon>
        <taxon>Enterobacteriaceae</taxon>
        <taxon>Escherichia</taxon>
    </lineage>
</organism>